<keyword id="KW-0028">Amino-acid biosynthesis</keyword>
<keyword id="KW-0055">Arginine biosynthesis</keyword>
<keyword id="KW-0067">ATP-binding</keyword>
<keyword id="KW-0315">Glutamine amidotransferase</keyword>
<keyword id="KW-0436">Ligase</keyword>
<keyword id="KW-0547">Nucleotide-binding</keyword>
<keyword id="KW-0665">Pyrimidine biosynthesis</keyword>
<dbReference type="EC" id="6.3.5.5" evidence="1"/>
<dbReference type="EMBL" id="BA000011">
    <property type="protein sequence ID" value="BAB59958.1"/>
    <property type="molecule type" value="Genomic_DNA"/>
</dbReference>
<dbReference type="RefSeq" id="WP_010917060.1">
    <property type="nucleotide sequence ID" value="NC_002689.2"/>
</dbReference>
<dbReference type="SMR" id="Q97AJ4"/>
<dbReference type="STRING" id="273116.gene:9381606"/>
<dbReference type="PaxDb" id="273116-14325032"/>
<dbReference type="GeneID" id="1441908"/>
<dbReference type="KEGG" id="tvo:TVG0820736"/>
<dbReference type="eggNOG" id="arCOG00064">
    <property type="taxonomic scope" value="Archaea"/>
</dbReference>
<dbReference type="HOGENOM" id="CLU_035901_2_1_2"/>
<dbReference type="OrthoDB" id="7675at2157"/>
<dbReference type="PhylomeDB" id="Q97AJ4"/>
<dbReference type="UniPathway" id="UPA00068">
    <property type="reaction ID" value="UER00171"/>
</dbReference>
<dbReference type="UniPathway" id="UPA00070">
    <property type="reaction ID" value="UER00115"/>
</dbReference>
<dbReference type="Proteomes" id="UP000001017">
    <property type="component" value="Chromosome"/>
</dbReference>
<dbReference type="GO" id="GO:0005524">
    <property type="term" value="F:ATP binding"/>
    <property type="evidence" value="ECO:0007669"/>
    <property type="project" value="UniProtKB-UniRule"/>
</dbReference>
<dbReference type="GO" id="GO:0004088">
    <property type="term" value="F:carbamoyl-phosphate synthase (glutamine-hydrolyzing) activity"/>
    <property type="evidence" value="ECO:0007669"/>
    <property type="project" value="UniProtKB-UniRule"/>
</dbReference>
<dbReference type="GO" id="GO:0004359">
    <property type="term" value="F:glutaminase activity"/>
    <property type="evidence" value="ECO:0007669"/>
    <property type="project" value="RHEA"/>
</dbReference>
<dbReference type="GO" id="GO:0006207">
    <property type="term" value="P:'de novo' pyrimidine nucleobase biosynthetic process"/>
    <property type="evidence" value="ECO:0007669"/>
    <property type="project" value="InterPro"/>
</dbReference>
<dbReference type="GO" id="GO:0044205">
    <property type="term" value="P:'de novo' UMP biosynthetic process"/>
    <property type="evidence" value="ECO:0007669"/>
    <property type="project" value="UniProtKB-UniRule"/>
</dbReference>
<dbReference type="GO" id="GO:0006541">
    <property type="term" value="P:glutamine metabolic process"/>
    <property type="evidence" value="ECO:0007669"/>
    <property type="project" value="InterPro"/>
</dbReference>
<dbReference type="GO" id="GO:0006526">
    <property type="term" value="P:L-arginine biosynthetic process"/>
    <property type="evidence" value="ECO:0007669"/>
    <property type="project" value="UniProtKB-UniRule"/>
</dbReference>
<dbReference type="CDD" id="cd01744">
    <property type="entry name" value="GATase1_CPSase"/>
    <property type="match status" value="1"/>
</dbReference>
<dbReference type="Gene3D" id="3.40.50.880">
    <property type="match status" value="1"/>
</dbReference>
<dbReference type="Gene3D" id="3.50.30.20">
    <property type="entry name" value="Carbamoyl-phosphate synthase small subunit, N-terminal domain"/>
    <property type="match status" value="1"/>
</dbReference>
<dbReference type="InterPro" id="IPR050472">
    <property type="entry name" value="Anth_synth/Amidotransfase"/>
</dbReference>
<dbReference type="InterPro" id="IPR006274">
    <property type="entry name" value="CarbamoylP_synth_ssu"/>
</dbReference>
<dbReference type="InterPro" id="IPR002474">
    <property type="entry name" value="CarbamoylP_synth_ssu_N"/>
</dbReference>
<dbReference type="InterPro" id="IPR036480">
    <property type="entry name" value="CarbP_synth_ssu_N_sf"/>
</dbReference>
<dbReference type="InterPro" id="IPR029062">
    <property type="entry name" value="Class_I_gatase-like"/>
</dbReference>
<dbReference type="InterPro" id="IPR035686">
    <property type="entry name" value="CPSase_GATase1"/>
</dbReference>
<dbReference type="InterPro" id="IPR017926">
    <property type="entry name" value="GATASE"/>
</dbReference>
<dbReference type="NCBIfam" id="TIGR01368">
    <property type="entry name" value="CPSaseIIsmall"/>
    <property type="match status" value="1"/>
</dbReference>
<dbReference type="NCBIfam" id="NF009475">
    <property type="entry name" value="PRK12838.1"/>
    <property type="match status" value="1"/>
</dbReference>
<dbReference type="PANTHER" id="PTHR43418:SF7">
    <property type="entry name" value="CARBAMOYL-PHOSPHATE SYNTHASE SMALL CHAIN"/>
    <property type="match status" value="1"/>
</dbReference>
<dbReference type="PANTHER" id="PTHR43418">
    <property type="entry name" value="MULTIFUNCTIONAL TRYPTOPHAN BIOSYNTHESIS PROTEIN-RELATED"/>
    <property type="match status" value="1"/>
</dbReference>
<dbReference type="Pfam" id="PF00988">
    <property type="entry name" value="CPSase_sm_chain"/>
    <property type="match status" value="1"/>
</dbReference>
<dbReference type="Pfam" id="PF00117">
    <property type="entry name" value="GATase"/>
    <property type="match status" value="1"/>
</dbReference>
<dbReference type="PRINTS" id="PR00097">
    <property type="entry name" value="ANTSNTHASEII"/>
</dbReference>
<dbReference type="PRINTS" id="PR00099">
    <property type="entry name" value="CPSGATASE"/>
</dbReference>
<dbReference type="PRINTS" id="PR00096">
    <property type="entry name" value="GATASE"/>
</dbReference>
<dbReference type="SMART" id="SM01097">
    <property type="entry name" value="CPSase_sm_chain"/>
    <property type="match status" value="1"/>
</dbReference>
<dbReference type="SUPFAM" id="SSF52021">
    <property type="entry name" value="Carbamoyl phosphate synthetase, small subunit N-terminal domain"/>
    <property type="match status" value="1"/>
</dbReference>
<dbReference type="SUPFAM" id="SSF52317">
    <property type="entry name" value="Class I glutamine amidotransferase-like"/>
    <property type="match status" value="1"/>
</dbReference>
<dbReference type="PROSITE" id="PS51273">
    <property type="entry name" value="GATASE_TYPE_1"/>
    <property type="match status" value="1"/>
</dbReference>
<gene>
    <name evidence="1" type="primary">carA</name>
    <name type="ordered locus">TV0816</name>
    <name type="ORF">TVG0820736</name>
</gene>
<sequence length="345" mass="37923">MKKYLVMEDGTVLSGQGYGSYKEAYGELVFTTSMTGYLETLTDPSYVGQMLVFASPTIANYALEMGKMESNGVKVSALITKDAHIELKKGGYGREFDEFLKEQGIPGIDGIDTRMLVRKIRANGVLRSYVVNDPSHSLDFPDPMNDDLVSKAVPHHDPVFVKGEEGGTVLFIDLGSKNTLKELMLQNFSLIVVDKQTNLDEIEGYDAIFVSNGPGDPSHPSLSNVIKFLSHNIGVKPLFGICFGLQAISLAYGAKTYKMKFGHRGSNHAVTDGTHSYVTTHNHGYAVDGSTVKDFKVIGWDANDGTVEIIEGDDMFAVQFHPEASPGPHDTRWFFGEMKRRIGYA</sequence>
<proteinExistence type="inferred from homology"/>
<organism>
    <name type="scientific">Thermoplasma volcanium (strain ATCC 51530 / DSM 4299 / JCM 9571 / NBRC 15438 / GSS1)</name>
    <dbReference type="NCBI Taxonomy" id="273116"/>
    <lineage>
        <taxon>Archaea</taxon>
        <taxon>Methanobacteriati</taxon>
        <taxon>Thermoplasmatota</taxon>
        <taxon>Thermoplasmata</taxon>
        <taxon>Thermoplasmatales</taxon>
        <taxon>Thermoplasmataceae</taxon>
        <taxon>Thermoplasma</taxon>
    </lineage>
</organism>
<reference key="1">
    <citation type="journal article" date="2000" name="Proc. Natl. Acad. Sci. U.S.A.">
        <title>Archaeal adaptation to higher temperatures revealed by genomic sequence of Thermoplasma volcanium.</title>
        <authorList>
            <person name="Kawashima T."/>
            <person name="Amano N."/>
            <person name="Koike H."/>
            <person name="Makino S."/>
            <person name="Higuchi S."/>
            <person name="Kawashima-Ohya Y."/>
            <person name="Watanabe K."/>
            <person name="Yamazaki M."/>
            <person name="Kanehori K."/>
            <person name="Kawamoto T."/>
            <person name="Nunoshiba T."/>
            <person name="Yamamoto Y."/>
            <person name="Aramaki H."/>
            <person name="Makino K."/>
            <person name="Suzuki M."/>
        </authorList>
    </citation>
    <scope>NUCLEOTIDE SEQUENCE [LARGE SCALE GENOMIC DNA]</scope>
    <source>
        <strain>ATCC 51530 / DSM 4299 / JCM 9571 / NBRC 15438 / GSS1</strain>
    </source>
</reference>
<comment type="function">
    <text evidence="1">Small subunit of the glutamine-dependent carbamoyl phosphate synthetase (CPSase). CPSase catalyzes the formation of carbamoyl phosphate from the ammonia moiety of glutamine, carbonate, and phosphate donated by ATP, constituting the first step of 2 biosynthetic pathways, one leading to arginine and/or urea and the other to pyrimidine nucleotides. The small subunit (glutamine amidotransferase) binds and cleaves glutamine to supply the large subunit with the substrate ammonia.</text>
</comment>
<comment type="catalytic activity">
    <reaction evidence="1">
        <text>hydrogencarbonate + L-glutamine + 2 ATP + H2O = carbamoyl phosphate + L-glutamate + 2 ADP + phosphate + 2 H(+)</text>
        <dbReference type="Rhea" id="RHEA:18633"/>
        <dbReference type="ChEBI" id="CHEBI:15377"/>
        <dbReference type="ChEBI" id="CHEBI:15378"/>
        <dbReference type="ChEBI" id="CHEBI:17544"/>
        <dbReference type="ChEBI" id="CHEBI:29985"/>
        <dbReference type="ChEBI" id="CHEBI:30616"/>
        <dbReference type="ChEBI" id="CHEBI:43474"/>
        <dbReference type="ChEBI" id="CHEBI:58228"/>
        <dbReference type="ChEBI" id="CHEBI:58359"/>
        <dbReference type="ChEBI" id="CHEBI:456216"/>
        <dbReference type="EC" id="6.3.5.5"/>
    </reaction>
</comment>
<comment type="catalytic activity">
    <molecule>Carbamoyl phosphate synthase small chain</molecule>
    <reaction evidence="1">
        <text>L-glutamine + H2O = L-glutamate + NH4(+)</text>
        <dbReference type="Rhea" id="RHEA:15889"/>
        <dbReference type="ChEBI" id="CHEBI:15377"/>
        <dbReference type="ChEBI" id="CHEBI:28938"/>
        <dbReference type="ChEBI" id="CHEBI:29985"/>
        <dbReference type="ChEBI" id="CHEBI:58359"/>
    </reaction>
</comment>
<comment type="pathway">
    <text evidence="1">Amino-acid biosynthesis; L-arginine biosynthesis; carbamoyl phosphate from bicarbonate: step 1/1.</text>
</comment>
<comment type="pathway">
    <text evidence="1">Pyrimidine metabolism; UMP biosynthesis via de novo pathway; (S)-dihydroorotate from bicarbonate: step 1/3.</text>
</comment>
<comment type="subunit">
    <text evidence="1">Composed of two chains; the small (or glutamine) chain promotes the hydrolysis of glutamine to ammonia, which is used by the large (or ammonia) chain to synthesize carbamoyl phosphate. Tetramer of heterodimers (alpha,beta)4.</text>
</comment>
<comment type="similarity">
    <text evidence="1">Belongs to the CarA family.</text>
</comment>
<accession>Q97AJ4</accession>
<evidence type="ECO:0000255" key="1">
    <source>
        <dbReference type="HAMAP-Rule" id="MF_01209"/>
    </source>
</evidence>
<feature type="chain" id="PRO_0000112368" description="Carbamoyl phosphate synthase small chain">
    <location>
        <begin position="1"/>
        <end position="345"/>
    </location>
</feature>
<feature type="domain" description="Glutamine amidotransferase type-1" evidence="1">
    <location>
        <begin position="168"/>
        <end position="345"/>
    </location>
</feature>
<feature type="region of interest" description="CPSase" evidence="1">
    <location>
        <begin position="1"/>
        <end position="169"/>
    </location>
</feature>
<feature type="active site" description="Nucleophile" evidence="1">
    <location>
        <position position="242"/>
    </location>
</feature>
<feature type="active site" evidence="1">
    <location>
        <position position="321"/>
    </location>
</feature>
<feature type="active site" evidence="1">
    <location>
        <position position="323"/>
    </location>
</feature>
<feature type="binding site" evidence="1">
    <location>
        <position position="45"/>
    </location>
    <ligand>
        <name>L-glutamine</name>
        <dbReference type="ChEBI" id="CHEBI:58359"/>
    </ligand>
</feature>
<feature type="binding site" evidence="1">
    <location>
        <position position="213"/>
    </location>
    <ligand>
        <name>L-glutamine</name>
        <dbReference type="ChEBI" id="CHEBI:58359"/>
    </ligand>
</feature>
<feature type="binding site" evidence="1">
    <location>
        <position position="215"/>
    </location>
    <ligand>
        <name>L-glutamine</name>
        <dbReference type="ChEBI" id="CHEBI:58359"/>
    </ligand>
</feature>
<feature type="binding site" evidence="1">
    <location>
        <position position="243"/>
    </location>
    <ligand>
        <name>L-glutamine</name>
        <dbReference type="ChEBI" id="CHEBI:58359"/>
    </ligand>
</feature>
<feature type="binding site" evidence="1">
    <location>
        <position position="246"/>
    </location>
    <ligand>
        <name>L-glutamine</name>
        <dbReference type="ChEBI" id="CHEBI:58359"/>
    </ligand>
</feature>
<feature type="binding site" evidence="1">
    <location>
        <position position="282"/>
    </location>
    <ligand>
        <name>L-glutamine</name>
        <dbReference type="ChEBI" id="CHEBI:58359"/>
    </ligand>
</feature>
<feature type="binding site" evidence="1">
    <location>
        <position position="284"/>
    </location>
    <ligand>
        <name>L-glutamine</name>
        <dbReference type="ChEBI" id="CHEBI:58359"/>
    </ligand>
</feature>
<feature type="binding site" evidence="1">
    <location>
        <position position="285"/>
    </location>
    <ligand>
        <name>L-glutamine</name>
        <dbReference type="ChEBI" id="CHEBI:58359"/>
    </ligand>
</feature>
<protein>
    <recommendedName>
        <fullName evidence="1">Carbamoyl phosphate synthase small chain</fullName>
        <ecNumber evidence="1">6.3.5.5</ecNumber>
    </recommendedName>
    <alternativeName>
        <fullName evidence="1">Carbamoyl phosphate synthetase glutamine chain</fullName>
    </alternativeName>
</protein>
<name>CARA_THEVO</name>